<dbReference type="EC" id="2.5.1.55" evidence="1"/>
<dbReference type="EMBL" id="FM180568">
    <property type="protein sequence ID" value="CAS08886.1"/>
    <property type="molecule type" value="Genomic_DNA"/>
</dbReference>
<dbReference type="RefSeq" id="WP_000811065.1">
    <property type="nucleotide sequence ID" value="NC_011601.1"/>
</dbReference>
<dbReference type="SMR" id="B7UQA3"/>
<dbReference type="GeneID" id="75203328"/>
<dbReference type="KEGG" id="ecg:E2348C_1338"/>
<dbReference type="HOGENOM" id="CLU_036666_0_0_6"/>
<dbReference type="UniPathway" id="UPA00030"/>
<dbReference type="UniPathway" id="UPA00357">
    <property type="reaction ID" value="UER00474"/>
</dbReference>
<dbReference type="Proteomes" id="UP000008205">
    <property type="component" value="Chromosome"/>
</dbReference>
<dbReference type="GO" id="GO:0005737">
    <property type="term" value="C:cytoplasm"/>
    <property type="evidence" value="ECO:0007669"/>
    <property type="project" value="UniProtKB-SubCell"/>
</dbReference>
<dbReference type="GO" id="GO:0008676">
    <property type="term" value="F:3-deoxy-8-phosphooctulonate synthase activity"/>
    <property type="evidence" value="ECO:0007669"/>
    <property type="project" value="UniProtKB-UniRule"/>
</dbReference>
<dbReference type="GO" id="GO:0019294">
    <property type="term" value="P:keto-3-deoxy-D-manno-octulosonic acid biosynthetic process"/>
    <property type="evidence" value="ECO:0007669"/>
    <property type="project" value="UniProtKB-UniRule"/>
</dbReference>
<dbReference type="FunFam" id="3.20.20.70:FF:000058">
    <property type="entry name" value="2-dehydro-3-deoxyphosphooctonate aldolase"/>
    <property type="match status" value="1"/>
</dbReference>
<dbReference type="Gene3D" id="3.20.20.70">
    <property type="entry name" value="Aldolase class I"/>
    <property type="match status" value="1"/>
</dbReference>
<dbReference type="HAMAP" id="MF_00056">
    <property type="entry name" value="KDO8P_synth"/>
    <property type="match status" value="1"/>
</dbReference>
<dbReference type="InterPro" id="IPR013785">
    <property type="entry name" value="Aldolase_TIM"/>
</dbReference>
<dbReference type="InterPro" id="IPR006218">
    <property type="entry name" value="DAHP1/KDSA"/>
</dbReference>
<dbReference type="InterPro" id="IPR006269">
    <property type="entry name" value="KDO8P_synthase"/>
</dbReference>
<dbReference type="NCBIfam" id="TIGR01362">
    <property type="entry name" value="KDO8P_synth"/>
    <property type="match status" value="1"/>
</dbReference>
<dbReference type="NCBIfam" id="NF003543">
    <property type="entry name" value="PRK05198.1"/>
    <property type="match status" value="1"/>
</dbReference>
<dbReference type="NCBIfam" id="NF009109">
    <property type="entry name" value="PRK12457.1"/>
    <property type="match status" value="1"/>
</dbReference>
<dbReference type="PANTHER" id="PTHR21057">
    <property type="entry name" value="PHOSPHO-2-DEHYDRO-3-DEOXYHEPTONATE ALDOLASE"/>
    <property type="match status" value="1"/>
</dbReference>
<dbReference type="Pfam" id="PF00793">
    <property type="entry name" value="DAHP_synth_1"/>
    <property type="match status" value="1"/>
</dbReference>
<dbReference type="SUPFAM" id="SSF51569">
    <property type="entry name" value="Aldolase"/>
    <property type="match status" value="1"/>
</dbReference>
<protein>
    <recommendedName>
        <fullName evidence="1">2-dehydro-3-deoxyphosphooctonate aldolase</fullName>
        <ecNumber evidence="1">2.5.1.55</ecNumber>
    </recommendedName>
    <alternativeName>
        <fullName evidence="1">3-deoxy-D-manno-octulosonic acid 8-phosphate synthase</fullName>
    </alternativeName>
    <alternativeName>
        <fullName evidence="1">KDO-8-phosphate synthase</fullName>
        <shortName evidence="1">KDO 8-P synthase</shortName>
        <shortName evidence="1">KDOPS</shortName>
    </alternativeName>
    <alternativeName>
        <fullName evidence="1">Phospho-2-dehydro-3-deoxyoctonate aldolase</fullName>
    </alternativeName>
</protein>
<gene>
    <name evidence="1" type="primary">kdsA</name>
    <name type="ordered locus">E2348C_1338</name>
</gene>
<keyword id="KW-0963">Cytoplasm</keyword>
<keyword id="KW-0448">Lipopolysaccharide biosynthesis</keyword>
<keyword id="KW-1185">Reference proteome</keyword>
<keyword id="KW-0808">Transferase</keyword>
<organism>
    <name type="scientific">Escherichia coli O127:H6 (strain E2348/69 / EPEC)</name>
    <dbReference type="NCBI Taxonomy" id="574521"/>
    <lineage>
        <taxon>Bacteria</taxon>
        <taxon>Pseudomonadati</taxon>
        <taxon>Pseudomonadota</taxon>
        <taxon>Gammaproteobacteria</taxon>
        <taxon>Enterobacterales</taxon>
        <taxon>Enterobacteriaceae</taxon>
        <taxon>Escherichia</taxon>
    </lineage>
</organism>
<feature type="chain" id="PRO_1000117776" description="2-dehydro-3-deoxyphosphooctonate aldolase">
    <location>
        <begin position="1"/>
        <end position="284"/>
    </location>
</feature>
<evidence type="ECO:0000255" key="1">
    <source>
        <dbReference type="HAMAP-Rule" id="MF_00056"/>
    </source>
</evidence>
<name>KDSA_ECO27</name>
<accession>B7UQA3</accession>
<reference key="1">
    <citation type="journal article" date="2009" name="J. Bacteriol.">
        <title>Complete genome sequence and comparative genome analysis of enteropathogenic Escherichia coli O127:H6 strain E2348/69.</title>
        <authorList>
            <person name="Iguchi A."/>
            <person name="Thomson N.R."/>
            <person name="Ogura Y."/>
            <person name="Saunders D."/>
            <person name="Ooka T."/>
            <person name="Henderson I.R."/>
            <person name="Harris D."/>
            <person name="Asadulghani M."/>
            <person name="Kurokawa K."/>
            <person name="Dean P."/>
            <person name="Kenny B."/>
            <person name="Quail M.A."/>
            <person name="Thurston S."/>
            <person name="Dougan G."/>
            <person name="Hayashi T."/>
            <person name="Parkhill J."/>
            <person name="Frankel G."/>
        </authorList>
    </citation>
    <scope>NUCLEOTIDE SEQUENCE [LARGE SCALE GENOMIC DNA]</scope>
    <source>
        <strain>E2348/69 / EPEC</strain>
    </source>
</reference>
<sequence>MKQKVVSIGDINVANDLPFVLFGGMNVLESRDLAMRICEHYVTVTQKLGIPYVFKASFDKANRSSIHSYRGPGLEEGMKIFQELKQTFGVKIITDVHEPSQAQPVADVVDVIQLPAFLARQTDLVEAMAKTGAVINVKKPQFVSPGQMGNIVDKFKEGGNEKVILCDRGANFGYDNLVVDMLGFSIMKKVSGNSPVIFDVTHALQCRDPFGAASGGRRAQVAELARAGMAVGLAGLFIEAHPDPEHAKCDGPSALPLAKLEPFLKQMKAIDDLVKGFEELDTSK</sequence>
<comment type="catalytic activity">
    <reaction evidence="1">
        <text>D-arabinose 5-phosphate + phosphoenolpyruvate + H2O = 3-deoxy-alpha-D-manno-2-octulosonate-8-phosphate + phosphate</text>
        <dbReference type="Rhea" id="RHEA:14053"/>
        <dbReference type="ChEBI" id="CHEBI:15377"/>
        <dbReference type="ChEBI" id="CHEBI:43474"/>
        <dbReference type="ChEBI" id="CHEBI:57693"/>
        <dbReference type="ChEBI" id="CHEBI:58702"/>
        <dbReference type="ChEBI" id="CHEBI:85985"/>
        <dbReference type="EC" id="2.5.1.55"/>
    </reaction>
</comment>
<comment type="pathway">
    <text evidence="1">Carbohydrate biosynthesis; 3-deoxy-D-manno-octulosonate biosynthesis; 3-deoxy-D-manno-octulosonate from D-ribulose 5-phosphate: step 2/3.</text>
</comment>
<comment type="pathway">
    <text evidence="1">Bacterial outer membrane biogenesis; lipopolysaccharide biosynthesis.</text>
</comment>
<comment type="subcellular location">
    <subcellularLocation>
        <location evidence="1">Cytoplasm</location>
    </subcellularLocation>
</comment>
<comment type="similarity">
    <text evidence="1">Belongs to the KdsA family.</text>
</comment>
<proteinExistence type="inferred from homology"/>